<accession>B7JK73</accession>
<name>COAX_BACC0</name>
<feature type="chain" id="PRO_1000140218" description="Type III pantothenate kinase">
    <location>
        <begin position="1"/>
        <end position="262"/>
    </location>
</feature>
<feature type="active site" description="Proton acceptor" evidence="1">
    <location>
        <position position="109"/>
    </location>
</feature>
<feature type="binding site" evidence="1">
    <location>
        <begin position="6"/>
        <end position="13"/>
    </location>
    <ligand>
        <name>ATP</name>
        <dbReference type="ChEBI" id="CHEBI:30616"/>
    </ligand>
</feature>
<feature type="binding site" evidence="1">
    <location>
        <position position="100"/>
    </location>
    <ligand>
        <name>substrate</name>
    </ligand>
</feature>
<feature type="binding site" evidence="1">
    <location>
        <begin position="107"/>
        <end position="110"/>
    </location>
    <ligand>
        <name>substrate</name>
    </ligand>
</feature>
<feature type="binding site" evidence="1">
    <location>
        <position position="129"/>
    </location>
    <ligand>
        <name>K(+)</name>
        <dbReference type="ChEBI" id="CHEBI:29103"/>
    </ligand>
</feature>
<feature type="binding site" evidence="1">
    <location>
        <position position="132"/>
    </location>
    <ligand>
        <name>ATP</name>
        <dbReference type="ChEBI" id="CHEBI:30616"/>
    </ligand>
</feature>
<feature type="binding site" evidence="1">
    <location>
        <position position="184"/>
    </location>
    <ligand>
        <name>substrate</name>
    </ligand>
</feature>
<organism>
    <name type="scientific">Bacillus cereus (strain AH820)</name>
    <dbReference type="NCBI Taxonomy" id="405535"/>
    <lineage>
        <taxon>Bacteria</taxon>
        <taxon>Bacillati</taxon>
        <taxon>Bacillota</taxon>
        <taxon>Bacilli</taxon>
        <taxon>Bacillales</taxon>
        <taxon>Bacillaceae</taxon>
        <taxon>Bacillus</taxon>
        <taxon>Bacillus cereus group</taxon>
    </lineage>
</organism>
<protein>
    <recommendedName>
        <fullName evidence="1">Type III pantothenate kinase</fullName>
        <ecNumber evidence="1">2.7.1.33</ecNumber>
    </recommendedName>
    <alternativeName>
        <fullName evidence="1">PanK-III</fullName>
    </alternativeName>
    <alternativeName>
        <fullName evidence="1">Pantothenic acid kinase</fullName>
    </alternativeName>
</protein>
<gene>
    <name evidence="1" type="primary">coaX</name>
    <name type="ordered locus">BCAH820_0074</name>
</gene>
<reference key="1">
    <citation type="submission" date="2008-10" db="EMBL/GenBank/DDBJ databases">
        <title>Genome sequence of Bacillus cereus AH820.</title>
        <authorList>
            <person name="Dodson R.J."/>
            <person name="Durkin A.S."/>
            <person name="Rosovitz M.J."/>
            <person name="Rasko D.A."/>
            <person name="Hoffmaster A."/>
            <person name="Ravel J."/>
            <person name="Sutton G."/>
        </authorList>
    </citation>
    <scope>NUCLEOTIDE SEQUENCE [LARGE SCALE GENOMIC DNA]</scope>
    <source>
        <strain>AH820</strain>
    </source>
</reference>
<proteinExistence type="inferred from homology"/>
<dbReference type="EC" id="2.7.1.33" evidence="1"/>
<dbReference type="EMBL" id="CP001283">
    <property type="protein sequence ID" value="ACK91139.1"/>
    <property type="molecule type" value="Genomic_DNA"/>
</dbReference>
<dbReference type="RefSeq" id="WP_000578367.1">
    <property type="nucleotide sequence ID" value="NC_011773.1"/>
</dbReference>
<dbReference type="SMR" id="B7JK73"/>
<dbReference type="KEGG" id="bcu:BCAH820_0074"/>
<dbReference type="HOGENOM" id="CLU_066627_1_0_9"/>
<dbReference type="UniPathway" id="UPA00241">
    <property type="reaction ID" value="UER00352"/>
</dbReference>
<dbReference type="Proteomes" id="UP000001363">
    <property type="component" value="Chromosome"/>
</dbReference>
<dbReference type="GO" id="GO:0005737">
    <property type="term" value="C:cytoplasm"/>
    <property type="evidence" value="ECO:0007669"/>
    <property type="project" value="UniProtKB-SubCell"/>
</dbReference>
<dbReference type="GO" id="GO:0005524">
    <property type="term" value="F:ATP binding"/>
    <property type="evidence" value="ECO:0007669"/>
    <property type="project" value="UniProtKB-UniRule"/>
</dbReference>
<dbReference type="GO" id="GO:0046872">
    <property type="term" value="F:metal ion binding"/>
    <property type="evidence" value="ECO:0007669"/>
    <property type="project" value="UniProtKB-KW"/>
</dbReference>
<dbReference type="GO" id="GO:0004594">
    <property type="term" value="F:pantothenate kinase activity"/>
    <property type="evidence" value="ECO:0007669"/>
    <property type="project" value="UniProtKB-UniRule"/>
</dbReference>
<dbReference type="GO" id="GO:0015937">
    <property type="term" value="P:coenzyme A biosynthetic process"/>
    <property type="evidence" value="ECO:0007669"/>
    <property type="project" value="UniProtKB-UniRule"/>
</dbReference>
<dbReference type="CDD" id="cd24015">
    <property type="entry name" value="ASKHA_NBD_PanK-III"/>
    <property type="match status" value="1"/>
</dbReference>
<dbReference type="Gene3D" id="3.30.420.40">
    <property type="match status" value="2"/>
</dbReference>
<dbReference type="HAMAP" id="MF_01274">
    <property type="entry name" value="Pantothen_kinase_3"/>
    <property type="match status" value="1"/>
</dbReference>
<dbReference type="InterPro" id="IPR043129">
    <property type="entry name" value="ATPase_NBD"/>
</dbReference>
<dbReference type="InterPro" id="IPR004619">
    <property type="entry name" value="Type_III_PanK"/>
</dbReference>
<dbReference type="NCBIfam" id="TIGR00671">
    <property type="entry name" value="baf"/>
    <property type="match status" value="1"/>
</dbReference>
<dbReference type="NCBIfam" id="NF009843">
    <property type="entry name" value="PRK13318.1-1"/>
    <property type="match status" value="1"/>
</dbReference>
<dbReference type="NCBIfam" id="NF009847">
    <property type="entry name" value="PRK13318.1-5"/>
    <property type="match status" value="1"/>
</dbReference>
<dbReference type="NCBIfam" id="NF009848">
    <property type="entry name" value="PRK13318.1-6"/>
    <property type="match status" value="1"/>
</dbReference>
<dbReference type="NCBIfam" id="NF009855">
    <property type="entry name" value="PRK13321.1"/>
    <property type="match status" value="1"/>
</dbReference>
<dbReference type="PANTHER" id="PTHR34265">
    <property type="entry name" value="TYPE III PANTOTHENATE KINASE"/>
    <property type="match status" value="1"/>
</dbReference>
<dbReference type="PANTHER" id="PTHR34265:SF1">
    <property type="entry name" value="TYPE III PANTOTHENATE KINASE"/>
    <property type="match status" value="1"/>
</dbReference>
<dbReference type="Pfam" id="PF03309">
    <property type="entry name" value="Pan_kinase"/>
    <property type="match status" value="1"/>
</dbReference>
<dbReference type="SUPFAM" id="SSF53067">
    <property type="entry name" value="Actin-like ATPase domain"/>
    <property type="match status" value="2"/>
</dbReference>
<comment type="function">
    <text evidence="1">Catalyzes the phosphorylation of pantothenate (Pan), the first step in CoA biosynthesis.</text>
</comment>
<comment type="catalytic activity">
    <reaction evidence="1">
        <text>(R)-pantothenate + ATP = (R)-4'-phosphopantothenate + ADP + H(+)</text>
        <dbReference type="Rhea" id="RHEA:16373"/>
        <dbReference type="ChEBI" id="CHEBI:10986"/>
        <dbReference type="ChEBI" id="CHEBI:15378"/>
        <dbReference type="ChEBI" id="CHEBI:29032"/>
        <dbReference type="ChEBI" id="CHEBI:30616"/>
        <dbReference type="ChEBI" id="CHEBI:456216"/>
        <dbReference type="EC" id="2.7.1.33"/>
    </reaction>
</comment>
<comment type="cofactor">
    <cofactor evidence="1">
        <name>NH4(+)</name>
        <dbReference type="ChEBI" id="CHEBI:28938"/>
    </cofactor>
    <cofactor evidence="1">
        <name>K(+)</name>
        <dbReference type="ChEBI" id="CHEBI:29103"/>
    </cofactor>
    <text evidence="1">A monovalent cation. Ammonium or potassium.</text>
</comment>
<comment type="pathway">
    <text evidence="1">Cofactor biosynthesis; coenzyme A biosynthesis; CoA from (R)-pantothenate: step 1/5.</text>
</comment>
<comment type="subunit">
    <text evidence="1">Homodimer.</text>
</comment>
<comment type="subcellular location">
    <subcellularLocation>
        <location evidence="1">Cytoplasm</location>
    </subcellularLocation>
</comment>
<comment type="similarity">
    <text evidence="1">Belongs to the type III pantothenate kinase family.</text>
</comment>
<evidence type="ECO:0000255" key="1">
    <source>
        <dbReference type="HAMAP-Rule" id="MF_01274"/>
    </source>
</evidence>
<sequence>MIFVLDVGNTNAVLGVFEEGELRQHWRMETDRHKTEDEYGMLVKQLLEHEGLSFEDVKGIIVSSVVPPIMFALERMCEKYFKIKPLVVGPGIKTGLNIKYENPREVGADRIVNAVAGIHLYGSPLIIVDFGTATTYCYINEEKHYMGGVITPGIMISAEALYSRAAKLPRIEITKPSSVVGKNTVSAMQSGILYGYVGQVEGIVKRMKEEAKQEPKVIATGGLAKLISEESNVIDVVDPFLTLKGLYMLYERNANLQHEKGE</sequence>
<keyword id="KW-0067">ATP-binding</keyword>
<keyword id="KW-0173">Coenzyme A biosynthesis</keyword>
<keyword id="KW-0963">Cytoplasm</keyword>
<keyword id="KW-0418">Kinase</keyword>
<keyword id="KW-0479">Metal-binding</keyword>
<keyword id="KW-0547">Nucleotide-binding</keyword>
<keyword id="KW-0630">Potassium</keyword>
<keyword id="KW-0808">Transferase</keyword>